<comment type="function">
    <text evidence="1 5 7 8">Component of the BLOC-1 complex, a complex that is required for normal biogenesis of lysosome-related organelles (LRO), such as platelet dense granules and melanosomes (By similarity). In concert with the AP-3 complex, the BLOC-1 complex is required to target membrane protein cargos into vesicles assembled at cell bodies for delivery into neurites and nerve terminals (PubMed:16760431, PubMed:21998198). The BLOC-1 complex, in association with SNARE proteins, is also proposed to be involved in neurite extension (PubMed:19546860). As part of the BORC complex may play a role in lysosomes movement and localization at the cell periphery. Associated with the cytosolic face of lysosomes, the BORC complex may recruit ARL8B and couple lysosomes to microtubule plus-end-directed kinesin motor (By similarity).</text>
</comment>
<comment type="subunit">
    <text evidence="1 4 6 8">Component of the biogenesis of lysosome-related organelles complex 1 (BLOC-1) composed of BLOC1S1, BLOC1S2, BLOC1S3, BLOC1S4, BLOC1S5, BLOC1S6, DTNBP1/BLOC1S7 and SNAPIN/BLOC1S8. Octamer composed of one copy each BLOC1S1, BLOC1S2, BLOC1S3, BLOC1S4, BLOC1S5, BLOC1S6, DTNBP1/BLOC1S7 and SNAPIN/BLOC1S8. Interacts directly with BLOC1S1, BLOC1S3, BLOC1S4, BLOC1S5 and SNAPIN (PubMed:15102850). The BLOC-1 complex associates with the AP-3 protein complex and membrane protein cargos (PubMed:21998198). Component of the BLOC-one-related complex (BORC) which is composed of BLOC1S1, BLOC1S2, BORCS5, BORCS6, BORCS7, BORCS8, KXD1 and SNAPIN (By similarity). Interacts with gamma-tubulin (By similarity). Interacts with IFT57 (PubMed:18188704).</text>
</comment>
<comment type="subcellular location">
    <subcellularLocation>
        <location evidence="1">Cytoplasm</location>
        <location evidence="1">Cytoskeleton</location>
        <location evidence="1">Microtubule organizing center</location>
        <location evidence="1">Centrosome</location>
    </subcellularLocation>
    <subcellularLocation>
        <location evidence="1">Lysosome membrane</location>
    </subcellularLocation>
    <text evidence="1">Localizes to the centrosomes in a microtubule-dependent manner.</text>
</comment>
<comment type="similarity">
    <text evidence="9">Belongs to the BLOC1S2 family.</text>
</comment>
<comment type="sequence caution" evidence="9">
    <conflict type="erroneous initiation">
        <sequence resource="EMBL-CDS" id="AAH65806"/>
    </conflict>
    <text>Truncated N-terminus.</text>
</comment>
<gene>
    <name type="primary">Bloc1s2</name>
    <name type="synonym">Blos2</name>
</gene>
<name>BL1S2_MOUSE</name>
<proteinExistence type="evidence at protein level"/>
<reference key="1">
    <citation type="journal article" date="2005" name="Science">
        <title>The transcriptional landscape of the mammalian genome.</title>
        <authorList>
            <person name="Carninci P."/>
            <person name="Kasukawa T."/>
            <person name="Katayama S."/>
            <person name="Gough J."/>
            <person name="Frith M.C."/>
            <person name="Maeda N."/>
            <person name="Oyama R."/>
            <person name="Ravasi T."/>
            <person name="Lenhard B."/>
            <person name="Wells C."/>
            <person name="Kodzius R."/>
            <person name="Shimokawa K."/>
            <person name="Bajic V.B."/>
            <person name="Brenner S.E."/>
            <person name="Batalov S."/>
            <person name="Forrest A.R."/>
            <person name="Zavolan M."/>
            <person name="Davis M.J."/>
            <person name="Wilming L.G."/>
            <person name="Aidinis V."/>
            <person name="Allen J.E."/>
            <person name="Ambesi-Impiombato A."/>
            <person name="Apweiler R."/>
            <person name="Aturaliya R.N."/>
            <person name="Bailey T.L."/>
            <person name="Bansal M."/>
            <person name="Baxter L."/>
            <person name="Beisel K.W."/>
            <person name="Bersano T."/>
            <person name="Bono H."/>
            <person name="Chalk A.M."/>
            <person name="Chiu K.P."/>
            <person name="Choudhary V."/>
            <person name="Christoffels A."/>
            <person name="Clutterbuck D.R."/>
            <person name="Crowe M.L."/>
            <person name="Dalla E."/>
            <person name="Dalrymple B.P."/>
            <person name="de Bono B."/>
            <person name="Della Gatta G."/>
            <person name="di Bernardo D."/>
            <person name="Down T."/>
            <person name="Engstrom P."/>
            <person name="Fagiolini M."/>
            <person name="Faulkner G."/>
            <person name="Fletcher C.F."/>
            <person name="Fukushima T."/>
            <person name="Furuno M."/>
            <person name="Futaki S."/>
            <person name="Gariboldi M."/>
            <person name="Georgii-Hemming P."/>
            <person name="Gingeras T.R."/>
            <person name="Gojobori T."/>
            <person name="Green R.E."/>
            <person name="Gustincich S."/>
            <person name="Harbers M."/>
            <person name="Hayashi Y."/>
            <person name="Hensch T.K."/>
            <person name="Hirokawa N."/>
            <person name="Hill D."/>
            <person name="Huminiecki L."/>
            <person name="Iacono M."/>
            <person name="Ikeo K."/>
            <person name="Iwama A."/>
            <person name="Ishikawa T."/>
            <person name="Jakt M."/>
            <person name="Kanapin A."/>
            <person name="Katoh M."/>
            <person name="Kawasawa Y."/>
            <person name="Kelso J."/>
            <person name="Kitamura H."/>
            <person name="Kitano H."/>
            <person name="Kollias G."/>
            <person name="Krishnan S.P."/>
            <person name="Kruger A."/>
            <person name="Kummerfeld S.K."/>
            <person name="Kurochkin I.V."/>
            <person name="Lareau L.F."/>
            <person name="Lazarevic D."/>
            <person name="Lipovich L."/>
            <person name="Liu J."/>
            <person name="Liuni S."/>
            <person name="McWilliam S."/>
            <person name="Madan Babu M."/>
            <person name="Madera M."/>
            <person name="Marchionni L."/>
            <person name="Matsuda H."/>
            <person name="Matsuzawa S."/>
            <person name="Miki H."/>
            <person name="Mignone F."/>
            <person name="Miyake S."/>
            <person name="Morris K."/>
            <person name="Mottagui-Tabar S."/>
            <person name="Mulder N."/>
            <person name="Nakano N."/>
            <person name="Nakauchi H."/>
            <person name="Ng P."/>
            <person name="Nilsson R."/>
            <person name="Nishiguchi S."/>
            <person name="Nishikawa S."/>
            <person name="Nori F."/>
            <person name="Ohara O."/>
            <person name="Okazaki Y."/>
            <person name="Orlando V."/>
            <person name="Pang K.C."/>
            <person name="Pavan W.J."/>
            <person name="Pavesi G."/>
            <person name="Pesole G."/>
            <person name="Petrovsky N."/>
            <person name="Piazza S."/>
            <person name="Reed J."/>
            <person name="Reid J.F."/>
            <person name="Ring B.Z."/>
            <person name="Ringwald M."/>
            <person name="Rost B."/>
            <person name="Ruan Y."/>
            <person name="Salzberg S.L."/>
            <person name="Sandelin A."/>
            <person name="Schneider C."/>
            <person name="Schoenbach C."/>
            <person name="Sekiguchi K."/>
            <person name="Semple C.A."/>
            <person name="Seno S."/>
            <person name="Sessa L."/>
            <person name="Sheng Y."/>
            <person name="Shibata Y."/>
            <person name="Shimada H."/>
            <person name="Shimada K."/>
            <person name="Silva D."/>
            <person name="Sinclair B."/>
            <person name="Sperling S."/>
            <person name="Stupka E."/>
            <person name="Sugiura K."/>
            <person name="Sultana R."/>
            <person name="Takenaka Y."/>
            <person name="Taki K."/>
            <person name="Tammoja K."/>
            <person name="Tan S.L."/>
            <person name="Tang S."/>
            <person name="Taylor M.S."/>
            <person name="Tegner J."/>
            <person name="Teichmann S.A."/>
            <person name="Ueda H.R."/>
            <person name="van Nimwegen E."/>
            <person name="Verardo R."/>
            <person name="Wei C.L."/>
            <person name="Yagi K."/>
            <person name="Yamanishi H."/>
            <person name="Zabarovsky E."/>
            <person name="Zhu S."/>
            <person name="Zimmer A."/>
            <person name="Hide W."/>
            <person name="Bult C."/>
            <person name="Grimmond S.M."/>
            <person name="Teasdale R.D."/>
            <person name="Liu E.T."/>
            <person name="Brusic V."/>
            <person name="Quackenbush J."/>
            <person name="Wahlestedt C."/>
            <person name="Mattick J.S."/>
            <person name="Hume D.A."/>
            <person name="Kai C."/>
            <person name="Sasaki D."/>
            <person name="Tomaru Y."/>
            <person name="Fukuda S."/>
            <person name="Kanamori-Katayama M."/>
            <person name="Suzuki M."/>
            <person name="Aoki J."/>
            <person name="Arakawa T."/>
            <person name="Iida J."/>
            <person name="Imamura K."/>
            <person name="Itoh M."/>
            <person name="Kato T."/>
            <person name="Kawaji H."/>
            <person name="Kawagashira N."/>
            <person name="Kawashima T."/>
            <person name="Kojima M."/>
            <person name="Kondo S."/>
            <person name="Konno H."/>
            <person name="Nakano K."/>
            <person name="Ninomiya N."/>
            <person name="Nishio T."/>
            <person name="Okada M."/>
            <person name="Plessy C."/>
            <person name="Shibata K."/>
            <person name="Shiraki T."/>
            <person name="Suzuki S."/>
            <person name="Tagami M."/>
            <person name="Waki K."/>
            <person name="Watahiki A."/>
            <person name="Okamura-Oho Y."/>
            <person name="Suzuki H."/>
            <person name="Kawai J."/>
            <person name="Hayashizaki Y."/>
        </authorList>
    </citation>
    <scope>NUCLEOTIDE SEQUENCE [LARGE SCALE MRNA]</scope>
    <source>
        <strain>C57BL/6J</strain>
    </source>
</reference>
<reference key="2">
    <citation type="journal article" date="2009" name="PLoS Biol.">
        <title>Lineage-specific biology revealed by a finished genome assembly of the mouse.</title>
        <authorList>
            <person name="Church D.M."/>
            <person name="Goodstadt L."/>
            <person name="Hillier L.W."/>
            <person name="Zody M.C."/>
            <person name="Goldstein S."/>
            <person name="She X."/>
            <person name="Bult C.J."/>
            <person name="Agarwala R."/>
            <person name="Cherry J.L."/>
            <person name="DiCuccio M."/>
            <person name="Hlavina W."/>
            <person name="Kapustin Y."/>
            <person name="Meric P."/>
            <person name="Maglott D."/>
            <person name="Birtle Z."/>
            <person name="Marques A.C."/>
            <person name="Graves T."/>
            <person name="Zhou S."/>
            <person name="Teague B."/>
            <person name="Potamousis K."/>
            <person name="Churas C."/>
            <person name="Place M."/>
            <person name="Herschleb J."/>
            <person name="Runnheim R."/>
            <person name="Forrest D."/>
            <person name="Amos-Landgraf J."/>
            <person name="Schwartz D.C."/>
            <person name="Cheng Z."/>
            <person name="Lindblad-Toh K."/>
            <person name="Eichler E.E."/>
            <person name="Ponting C.P."/>
        </authorList>
    </citation>
    <scope>NUCLEOTIDE SEQUENCE [LARGE SCALE GENOMIC DNA]</scope>
    <source>
        <strain>C57BL/6J</strain>
    </source>
</reference>
<reference key="3">
    <citation type="journal article" date="2004" name="Genome Res.">
        <title>The status, quality, and expansion of the NIH full-length cDNA project: the Mammalian Gene Collection (MGC).</title>
        <authorList>
            <consortium name="The MGC Project Team"/>
        </authorList>
    </citation>
    <scope>NUCLEOTIDE SEQUENCE [LARGE SCALE MRNA]</scope>
    <source>
        <tissue>Mammary gland</tissue>
    </source>
</reference>
<reference key="4">
    <citation type="journal article" date="2004" name="J. Biol. Chem.">
        <title>Identification of snapin and three novel proteins (BLOS1, BLOS2, and BLOS3/reduced pigmentation) as subunits of biogenesis of lysosome-related organelles complex-1 (BLOC-1).</title>
        <authorList>
            <person name="Starcevic M."/>
            <person name="Dell'Angelica E.C."/>
        </authorList>
    </citation>
    <scope>IDENTIFICATION IN THE BLOC-1 COMPLEX</scope>
</reference>
<reference key="5">
    <citation type="journal article" date="2006" name="Mol. Biol. Cell">
        <title>BLOC-1 complex deficiency alters the targeting of adaptor protein complex-3 cargoes.</title>
        <authorList>
            <person name="Salazar G."/>
            <person name="Craige B."/>
            <person name="Styers M.L."/>
            <person name="Newell-Litwa K.A."/>
            <person name="Doucette M.M."/>
            <person name="Wainer B.H."/>
            <person name="Falcon-Perez J.M."/>
            <person name="Dell'Angelica E.C."/>
            <person name="Peden A.A."/>
            <person name="Werner E."/>
            <person name="Faundez V."/>
        </authorList>
    </citation>
    <scope>FUNCTION</scope>
</reference>
<reference key="6">
    <citation type="journal article" date="2008" name="Apoptosis">
        <title>BLOC1S2 interacts with the HIPPI protein and sensitizes NCH89 glioblastoma cells to apoptosis.</title>
        <authorList>
            <person name="Gdynia G."/>
            <person name="Lehmann-Koch J."/>
            <person name="Sieber S."/>
            <person name="Tagscherer K.E."/>
            <person name="Fassl A."/>
            <person name="Zentgraf H."/>
            <person name="Matsuzawa S."/>
            <person name="Reed J.C."/>
            <person name="Roth W."/>
        </authorList>
    </citation>
    <scope>INTERACTION WITH IFT57</scope>
</reference>
<reference key="7">
    <citation type="journal article" date="2010" name="Cell">
        <title>A tissue-specific atlas of mouse protein phosphorylation and expression.</title>
        <authorList>
            <person name="Huttlin E.L."/>
            <person name="Jedrychowski M.P."/>
            <person name="Elias J.E."/>
            <person name="Goswami T."/>
            <person name="Rad R."/>
            <person name="Beausoleil S.A."/>
            <person name="Villen J."/>
            <person name="Haas W."/>
            <person name="Sowa M.E."/>
            <person name="Gygi S.P."/>
        </authorList>
    </citation>
    <scope>IDENTIFICATION BY MASS SPECTROMETRY [LARGE SCALE ANALYSIS]</scope>
    <source>
        <tissue>Brain</tissue>
        <tissue>Kidney</tissue>
        <tissue>Liver</tissue>
        <tissue>Spleen</tissue>
        <tissue>Testis</tissue>
    </source>
</reference>
<reference key="8">
    <citation type="journal article" date="2010" name="Mol. Psychiatry">
        <title>The dysbindin-containing complex (BLOC-1) in brain: developmental regulation, interaction with SNARE proteins and role in neurite outgrowth.</title>
        <authorList>
            <person name="Ghiani C.A."/>
            <person name="Starcevic M."/>
            <person name="Rodriguez-Fernandez I.A."/>
            <person name="Nazarian R."/>
            <person name="Cheli V.T."/>
            <person name="Chan L.N."/>
            <person name="Malvar J.S."/>
            <person name="de Vellis J."/>
            <person name="Sabatti C."/>
            <person name="Dell'Angelica E.C."/>
        </authorList>
    </citation>
    <scope>FUNCTION</scope>
</reference>
<reference key="9">
    <citation type="journal article" date="2011" name="Mol. Biol. Cell">
        <title>The schizophrenia susceptibility factor dysbindin and its associated complex sort cargoes from cell bodies to the synapse.</title>
        <authorList>
            <person name="Larimore J."/>
            <person name="Tornieri K."/>
            <person name="Ryder P.V."/>
            <person name="Gokhale A."/>
            <person name="Zlatic S.A."/>
            <person name="Craige B."/>
            <person name="Lee J.D."/>
            <person name="Talbot K."/>
            <person name="Pare J.F."/>
            <person name="Smith Y."/>
            <person name="Faundez V."/>
        </authorList>
    </citation>
    <scope>FUNCTION</scope>
    <scope>ASSOCIATION WITH THE AP-3 COMPLEX</scope>
</reference>
<evidence type="ECO:0000250" key="1">
    <source>
        <dbReference type="UniProtKB" id="Q6QNY1"/>
    </source>
</evidence>
<evidence type="ECO:0000255" key="2"/>
<evidence type="ECO:0000256" key="3">
    <source>
        <dbReference type="SAM" id="MobiDB-lite"/>
    </source>
</evidence>
<evidence type="ECO:0000269" key="4">
    <source>
    </source>
</evidence>
<evidence type="ECO:0000269" key="5">
    <source>
    </source>
</evidence>
<evidence type="ECO:0000269" key="6">
    <source>
    </source>
</evidence>
<evidence type="ECO:0000269" key="7">
    <source>
    </source>
</evidence>
<evidence type="ECO:0000269" key="8">
    <source>
    </source>
</evidence>
<evidence type="ECO:0000305" key="9"/>
<sequence>MAAAAEGVPATRREEQPPRDDAAVETAEEAKEPAEADINELCRDMFSKMATYLTGELTATSEDYKLLENMNKLTSLKYLEMKDIAINISRNLKDLNQKYAELQPYLDQINMIEEQVAALEQAAYKLDAYSKKLEAKYKKLEKR</sequence>
<protein>
    <recommendedName>
        <fullName>Biogenesis of lysosome-related organelles complex 1 subunit 2</fullName>
        <shortName>BLOC-1 subunit 2</shortName>
    </recommendedName>
</protein>
<organism>
    <name type="scientific">Mus musculus</name>
    <name type="common">Mouse</name>
    <dbReference type="NCBI Taxonomy" id="10090"/>
    <lineage>
        <taxon>Eukaryota</taxon>
        <taxon>Metazoa</taxon>
        <taxon>Chordata</taxon>
        <taxon>Craniata</taxon>
        <taxon>Vertebrata</taxon>
        <taxon>Euteleostomi</taxon>
        <taxon>Mammalia</taxon>
        <taxon>Eutheria</taxon>
        <taxon>Euarchontoglires</taxon>
        <taxon>Glires</taxon>
        <taxon>Rodentia</taxon>
        <taxon>Myomorpha</taxon>
        <taxon>Muroidea</taxon>
        <taxon>Muridae</taxon>
        <taxon>Murinae</taxon>
        <taxon>Mus</taxon>
        <taxon>Mus</taxon>
    </lineage>
</organism>
<dbReference type="EMBL" id="AK010745">
    <property type="protein sequence ID" value="BAB27155.1"/>
    <property type="molecule type" value="mRNA"/>
</dbReference>
<dbReference type="EMBL" id="AL928960">
    <property type="status" value="NOT_ANNOTATED_CDS"/>
    <property type="molecule type" value="Genomic_DNA"/>
</dbReference>
<dbReference type="EMBL" id="BC065806">
    <property type="protein sequence ID" value="AAH65806.1"/>
    <property type="status" value="ALT_INIT"/>
    <property type="molecule type" value="mRNA"/>
</dbReference>
<dbReference type="CCDS" id="CCDS50445.1"/>
<dbReference type="RefSeq" id="NP_082883.1">
    <property type="nucleotide sequence ID" value="NM_028607.1"/>
</dbReference>
<dbReference type="SMR" id="Q9CWG9"/>
<dbReference type="BioGRID" id="216191">
    <property type="interactions" value="3"/>
</dbReference>
<dbReference type="ComplexPortal" id="CPX-1913">
    <property type="entry name" value="BLOC-1 complex"/>
</dbReference>
<dbReference type="ComplexPortal" id="CPX-5061">
    <property type="entry name" value="BORC complex"/>
</dbReference>
<dbReference type="CORUM" id="Q9CWG9"/>
<dbReference type="FunCoup" id="Q9CWG9">
    <property type="interactions" value="1356"/>
</dbReference>
<dbReference type="STRING" id="10090.ENSMUSP00000078042"/>
<dbReference type="iPTMnet" id="Q9CWG9"/>
<dbReference type="PhosphoSitePlus" id="Q9CWG9"/>
<dbReference type="PaxDb" id="10090-ENSMUSP00000078042"/>
<dbReference type="PeptideAtlas" id="Q9CWG9"/>
<dbReference type="ProteomicsDB" id="273787"/>
<dbReference type="Pumba" id="Q9CWG9"/>
<dbReference type="Antibodypedia" id="55739">
    <property type="antibodies" value="109 antibodies from 22 providers"/>
</dbReference>
<dbReference type="Ensembl" id="ENSMUST00000079033.6">
    <property type="protein sequence ID" value="ENSMUSP00000078042.5"/>
    <property type="gene ID" value="ENSMUSG00000057506.6"/>
</dbReference>
<dbReference type="GeneID" id="73689"/>
<dbReference type="KEGG" id="mmu:73689"/>
<dbReference type="UCSC" id="uc008hpl.2">
    <property type="organism name" value="mouse"/>
</dbReference>
<dbReference type="AGR" id="MGI:1920939"/>
<dbReference type="CTD" id="282991"/>
<dbReference type="MGI" id="MGI:1920939">
    <property type="gene designation" value="Bloc1s2"/>
</dbReference>
<dbReference type="VEuPathDB" id="HostDB:ENSMUSG00000057506"/>
<dbReference type="eggNOG" id="KOG4559">
    <property type="taxonomic scope" value="Eukaryota"/>
</dbReference>
<dbReference type="GeneTree" id="ENSGT00390000005889"/>
<dbReference type="HOGENOM" id="CLU_110820_0_1_1"/>
<dbReference type="InParanoid" id="Q9CWG9"/>
<dbReference type="OMA" id="CSDMFEK"/>
<dbReference type="OrthoDB" id="244061at2759"/>
<dbReference type="PhylomeDB" id="Q9CWG9"/>
<dbReference type="TreeFam" id="TF313861"/>
<dbReference type="BioGRID-ORCS" id="73689">
    <property type="hits" value="8 hits in 76 CRISPR screens"/>
</dbReference>
<dbReference type="CD-CODE" id="CE726F99">
    <property type="entry name" value="Postsynaptic density"/>
</dbReference>
<dbReference type="ChiTaRS" id="Bloc1s2">
    <property type="organism name" value="mouse"/>
</dbReference>
<dbReference type="PRO" id="PR:Q9CWG9"/>
<dbReference type="Proteomes" id="UP000000589">
    <property type="component" value="Chromosome 19"/>
</dbReference>
<dbReference type="RNAct" id="Q9CWG9">
    <property type="molecule type" value="protein"/>
</dbReference>
<dbReference type="Bgee" id="ENSMUSG00000057506">
    <property type="expression patterns" value="Expressed in embryonic brain and 65 other cell types or tissues"/>
</dbReference>
<dbReference type="ExpressionAtlas" id="Q9CWG9">
    <property type="expression patterns" value="baseline and differential"/>
</dbReference>
<dbReference type="GO" id="GO:1904115">
    <property type="term" value="C:axon cytoplasm"/>
    <property type="evidence" value="ECO:0007669"/>
    <property type="project" value="GOC"/>
</dbReference>
<dbReference type="GO" id="GO:0031083">
    <property type="term" value="C:BLOC-1 complex"/>
    <property type="evidence" value="ECO:0000314"/>
    <property type="project" value="MGI"/>
</dbReference>
<dbReference type="GO" id="GO:0099078">
    <property type="term" value="C:BORC complex"/>
    <property type="evidence" value="ECO:0000266"/>
    <property type="project" value="ComplexPortal"/>
</dbReference>
<dbReference type="GO" id="GO:0005813">
    <property type="term" value="C:centrosome"/>
    <property type="evidence" value="ECO:0007669"/>
    <property type="project" value="UniProtKB-SubCell"/>
</dbReference>
<dbReference type="GO" id="GO:0098574">
    <property type="term" value="C:cytoplasmic side of lysosomal membrane"/>
    <property type="evidence" value="ECO:0000303"/>
    <property type="project" value="ComplexPortal"/>
</dbReference>
<dbReference type="GO" id="GO:0005829">
    <property type="term" value="C:cytosol"/>
    <property type="evidence" value="ECO:0000314"/>
    <property type="project" value="MGI"/>
</dbReference>
<dbReference type="GO" id="GO:0000930">
    <property type="term" value="C:gamma-tubulin complex"/>
    <property type="evidence" value="ECO:0007669"/>
    <property type="project" value="Ensembl"/>
</dbReference>
<dbReference type="GO" id="GO:0005739">
    <property type="term" value="C:mitochondrion"/>
    <property type="evidence" value="ECO:0000250"/>
    <property type="project" value="UniProtKB"/>
</dbReference>
<dbReference type="GO" id="GO:0043015">
    <property type="term" value="F:gamma-tubulin binding"/>
    <property type="evidence" value="ECO:0007669"/>
    <property type="project" value="Ensembl"/>
</dbReference>
<dbReference type="GO" id="GO:0008089">
    <property type="term" value="P:anterograde axonal transport"/>
    <property type="evidence" value="ECO:0000315"/>
    <property type="project" value="UniProtKB"/>
</dbReference>
<dbReference type="GO" id="GO:0048490">
    <property type="term" value="P:anterograde synaptic vesicle transport"/>
    <property type="evidence" value="ECO:0000315"/>
    <property type="project" value="UniProtKB"/>
</dbReference>
<dbReference type="GO" id="GO:0008625">
    <property type="term" value="P:extrinsic apoptotic signaling pathway via death domain receptors"/>
    <property type="evidence" value="ECO:0000250"/>
    <property type="project" value="UniProtKB"/>
</dbReference>
<dbReference type="GO" id="GO:0032418">
    <property type="term" value="P:lysosome localization"/>
    <property type="evidence" value="ECO:0000250"/>
    <property type="project" value="UniProtKB"/>
</dbReference>
<dbReference type="GO" id="GO:0032438">
    <property type="term" value="P:melanosome organization"/>
    <property type="evidence" value="ECO:0000303"/>
    <property type="project" value="ComplexPortal"/>
</dbReference>
<dbReference type="GO" id="GO:0097345">
    <property type="term" value="P:mitochondrial outer membrane permeabilization"/>
    <property type="evidence" value="ECO:0000250"/>
    <property type="project" value="UniProtKB"/>
</dbReference>
<dbReference type="GO" id="GO:0031175">
    <property type="term" value="P:neuron projection development"/>
    <property type="evidence" value="ECO:0000303"/>
    <property type="project" value="UniProtKB"/>
</dbReference>
<dbReference type="GO" id="GO:0072384">
    <property type="term" value="P:organelle transport along microtubule"/>
    <property type="evidence" value="ECO:0000303"/>
    <property type="project" value="ComplexPortal"/>
</dbReference>
<dbReference type="GO" id="GO:0051036">
    <property type="term" value="P:regulation of endosome size"/>
    <property type="evidence" value="ECO:0000303"/>
    <property type="project" value="ComplexPortal"/>
</dbReference>
<dbReference type="GO" id="GO:0062196">
    <property type="term" value="P:regulation of lysosome size"/>
    <property type="evidence" value="ECO:0000303"/>
    <property type="project" value="ComplexPortal"/>
</dbReference>
<dbReference type="InterPro" id="IPR019269">
    <property type="entry name" value="BLOC1_su2"/>
</dbReference>
<dbReference type="PANTHER" id="PTHR46479">
    <property type="entry name" value="BIOGENESIS OF LYSOSOME-RELATED ORGANELLES COMPLEX 1 SUBUNIT 2"/>
    <property type="match status" value="1"/>
</dbReference>
<dbReference type="PANTHER" id="PTHR46479:SF1">
    <property type="entry name" value="BIOGENESIS OF LYSOSOME-RELATED ORGANELLES COMPLEX 1 SUBUNIT 2"/>
    <property type="match status" value="1"/>
</dbReference>
<dbReference type="Pfam" id="PF10046">
    <property type="entry name" value="BLOC1_2"/>
    <property type="match status" value="1"/>
</dbReference>
<keyword id="KW-0007">Acetylation</keyword>
<keyword id="KW-0175">Coiled coil</keyword>
<keyword id="KW-0963">Cytoplasm</keyword>
<keyword id="KW-0206">Cytoskeleton</keyword>
<keyword id="KW-0458">Lysosome</keyword>
<keyword id="KW-0472">Membrane</keyword>
<keyword id="KW-1185">Reference proteome</keyword>
<feature type="initiator methionine" description="Removed" evidence="1">
    <location>
        <position position="1"/>
    </location>
</feature>
<feature type="chain" id="PRO_0000234545" description="Biogenesis of lysosome-related organelles complex 1 subunit 2">
    <location>
        <begin position="2"/>
        <end position="143"/>
    </location>
</feature>
<feature type="region of interest" description="Disordered" evidence="3">
    <location>
        <begin position="1"/>
        <end position="36"/>
    </location>
</feature>
<feature type="coiled-coil region" evidence="2">
    <location>
        <begin position="80"/>
        <end position="128"/>
    </location>
</feature>
<feature type="compositionally biased region" description="Basic and acidic residues" evidence="3">
    <location>
        <begin position="11"/>
        <end position="36"/>
    </location>
</feature>
<feature type="modified residue" description="N-acetylalanine" evidence="1">
    <location>
        <position position="2"/>
    </location>
</feature>
<accession>Q9CWG9</accession>
<accession>A2ATZ7</accession>
<accession>Q6P062</accession>